<accession>P03054</accession>
<organism>
    <name type="scientific">Salmonella typhimurium (strain LT2 / SGSC1412 / ATCC 700720)</name>
    <dbReference type="NCBI Taxonomy" id="99287"/>
    <lineage>
        <taxon>Bacteria</taxon>
        <taxon>Pseudomonadati</taxon>
        <taxon>Pseudomonadota</taxon>
        <taxon>Gammaproteobacteria</taxon>
        <taxon>Enterobacterales</taxon>
        <taxon>Enterobacteriaceae</taxon>
        <taxon>Salmonella</taxon>
    </lineage>
</organism>
<comment type="function">
    <text>This protein is involved in control of the biosynthesis of tryptophan.</text>
</comment>
<proteinExistence type="predicted"/>
<keyword id="KW-0028">Amino-acid biosynthesis</keyword>
<keyword id="KW-0057">Aromatic amino acid biosynthesis</keyword>
<keyword id="KW-0428">Leader peptide</keyword>
<keyword id="KW-1185">Reference proteome</keyword>
<keyword id="KW-0822">Tryptophan biosynthesis</keyword>
<feature type="peptide" id="PRO_0000044027" description="trp operon leader peptide">
    <location>
        <begin position="1"/>
        <end position="14"/>
    </location>
</feature>
<protein>
    <recommendedName>
        <fullName>trp operon leader peptide</fullName>
    </recommendedName>
</protein>
<name>LPW_SALTY</name>
<gene>
    <name type="primary">trpL</name>
    <name type="synonym">trpEE</name>
    <name type="ordered locus">STM1722</name>
</gene>
<dbReference type="EMBL" id="M24960">
    <property type="status" value="NOT_ANNOTATED_CDS"/>
    <property type="molecule type" value="Genomic_DNA"/>
</dbReference>
<dbReference type="EMBL" id="AE006468">
    <property type="protein sequence ID" value="AAL20640.1"/>
    <property type="molecule type" value="Genomic_DNA"/>
</dbReference>
<dbReference type="PIR" id="A03590">
    <property type="entry name" value="LFEBWT"/>
</dbReference>
<dbReference type="RefSeq" id="NP_448140.1">
    <property type="nucleotide sequence ID" value="NC_003197.2"/>
</dbReference>
<dbReference type="RefSeq" id="WP_010989026.1">
    <property type="nucleotide sequence ID" value="NC_003197.2"/>
</dbReference>
<dbReference type="STRING" id="99287.STM1722"/>
<dbReference type="PaxDb" id="99287-STM1722"/>
<dbReference type="GeneID" id="1253241"/>
<dbReference type="KEGG" id="stm:STM1722"/>
<dbReference type="HOGENOM" id="CLU_222400_0_0_6"/>
<dbReference type="BioCyc" id="SENT99287:STM1722-MONOMER"/>
<dbReference type="Proteomes" id="UP000001014">
    <property type="component" value="Chromosome"/>
</dbReference>
<dbReference type="GO" id="GO:0000162">
    <property type="term" value="P:L-tryptophan biosynthetic process"/>
    <property type="evidence" value="ECO:0007669"/>
    <property type="project" value="UniProtKB-KW"/>
</dbReference>
<dbReference type="InterPro" id="IPR013205">
    <property type="entry name" value="Leader_Trp_op"/>
</dbReference>
<dbReference type="Pfam" id="PF08255">
    <property type="entry name" value="Leader_Trp"/>
    <property type="match status" value="1"/>
</dbReference>
<sequence>MAATFALHGWWRTS</sequence>
<reference key="1">
    <citation type="journal article" date="1978" name="J. Mol. Biol.">
        <title>Comparison of the nucleotide sequences of the initial transcribed regions of the tryptophan operons of Escherichia coli and Salmonella typhimurium.</title>
        <authorList>
            <person name="Lee F."/>
            <person name="Bertrand K."/>
            <person name="Bennett G.N."/>
            <person name="Yanofsky C."/>
        </authorList>
    </citation>
    <scope>NUCLEOTIDE SEQUENCE [GENOMIC DNA]</scope>
</reference>
<reference key="2">
    <citation type="journal article" date="2001" name="Nature">
        <title>Complete genome sequence of Salmonella enterica serovar Typhimurium LT2.</title>
        <authorList>
            <person name="McClelland M."/>
            <person name="Sanderson K.E."/>
            <person name="Spieth J."/>
            <person name="Clifton S.W."/>
            <person name="Latreille P."/>
            <person name="Courtney L."/>
            <person name="Porwollik S."/>
            <person name="Ali J."/>
            <person name="Dante M."/>
            <person name="Du F."/>
            <person name="Hou S."/>
            <person name="Layman D."/>
            <person name="Leonard S."/>
            <person name="Nguyen C."/>
            <person name="Scott K."/>
            <person name="Holmes A."/>
            <person name="Grewal N."/>
            <person name="Mulvaney E."/>
            <person name="Ryan E."/>
            <person name="Sun H."/>
            <person name="Florea L."/>
            <person name="Miller W."/>
            <person name="Stoneking T."/>
            <person name="Nhan M."/>
            <person name="Waterston R."/>
            <person name="Wilson R.K."/>
        </authorList>
    </citation>
    <scope>NUCLEOTIDE SEQUENCE [LARGE SCALE GENOMIC DNA]</scope>
    <source>
        <strain>LT2 / SGSC1412 / ATCC 700720</strain>
    </source>
</reference>